<gene>
    <name evidence="1" type="primary">betA</name>
    <name type="ordered locus">ABAYE2868</name>
</gene>
<dbReference type="EC" id="1.1.99.1" evidence="1"/>
<dbReference type="EC" id="1.2.1.8" evidence="1"/>
<dbReference type="EMBL" id="CU459141">
    <property type="protein sequence ID" value="CAM87695.1"/>
    <property type="molecule type" value="Genomic_DNA"/>
</dbReference>
<dbReference type="RefSeq" id="WP_001021934.1">
    <property type="nucleotide sequence ID" value="NZ_JBDGFB010000015.1"/>
</dbReference>
<dbReference type="SMR" id="B0V945"/>
<dbReference type="EnsemblBacteria" id="CAM87695">
    <property type="protein sequence ID" value="CAM87695"/>
    <property type="gene ID" value="ABAYE2868"/>
</dbReference>
<dbReference type="GeneID" id="92892889"/>
<dbReference type="KEGG" id="aby:ABAYE2868"/>
<dbReference type="HOGENOM" id="CLU_002865_7_1_6"/>
<dbReference type="UniPathway" id="UPA00529">
    <property type="reaction ID" value="UER00385"/>
</dbReference>
<dbReference type="GO" id="GO:0016020">
    <property type="term" value="C:membrane"/>
    <property type="evidence" value="ECO:0007669"/>
    <property type="project" value="TreeGrafter"/>
</dbReference>
<dbReference type="GO" id="GO:0008802">
    <property type="term" value="F:betaine-aldehyde dehydrogenase (NAD+) activity"/>
    <property type="evidence" value="ECO:0007669"/>
    <property type="project" value="UniProtKB-EC"/>
</dbReference>
<dbReference type="GO" id="GO:0008812">
    <property type="term" value="F:choline dehydrogenase activity"/>
    <property type="evidence" value="ECO:0007669"/>
    <property type="project" value="UniProtKB-UniRule"/>
</dbReference>
<dbReference type="GO" id="GO:0050660">
    <property type="term" value="F:flavin adenine dinucleotide binding"/>
    <property type="evidence" value="ECO:0007669"/>
    <property type="project" value="InterPro"/>
</dbReference>
<dbReference type="GO" id="GO:0019285">
    <property type="term" value="P:glycine betaine biosynthetic process from choline"/>
    <property type="evidence" value="ECO:0007669"/>
    <property type="project" value="UniProtKB-UniRule"/>
</dbReference>
<dbReference type="Gene3D" id="3.50.50.60">
    <property type="entry name" value="FAD/NAD(P)-binding domain"/>
    <property type="match status" value="1"/>
</dbReference>
<dbReference type="Gene3D" id="3.30.560.10">
    <property type="entry name" value="Glucose Oxidase, domain 3"/>
    <property type="match status" value="1"/>
</dbReference>
<dbReference type="HAMAP" id="MF_00750">
    <property type="entry name" value="Choline_dehydrogen"/>
    <property type="match status" value="1"/>
</dbReference>
<dbReference type="InterPro" id="IPR011533">
    <property type="entry name" value="BetA"/>
</dbReference>
<dbReference type="InterPro" id="IPR036188">
    <property type="entry name" value="FAD/NAD-bd_sf"/>
</dbReference>
<dbReference type="InterPro" id="IPR012132">
    <property type="entry name" value="GMC_OxRdtase"/>
</dbReference>
<dbReference type="InterPro" id="IPR000172">
    <property type="entry name" value="GMC_OxRdtase_N"/>
</dbReference>
<dbReference type="InterPro" id="IPR007867">
    <property type="entry name" value="GMC_OxRtase_C"/>
</dbReference>
<dbReference type="NCBIfam" id="TIGR01810">
    <property type="entry name" value="betA"/>
    <property type="match status" value="1"/>
</dbReference>
<dbReference type="NCBIfam" id="NF002550">
    <property type="entry name" value="PRK02106.1"/>
    <property type="match status" value="1"/>
</dbReference>
<dbReference type="PANTHER" id="PTHR11552:SF147">
    <property type="entry name" value="CHOLINE DEHYDROGENASE, MITOCHONDRIAL"/>
    <property type="match status" value="1"/>
</dbReference>
<dbReference type="PANTHER" id="PTHR11552">
    <property type="entry name" value="GLUCOSE-METHANOL-CHOLINE GMC OXIDOREDUCTASE"/>
    <property type="match status" value="1"/>
</dbReference>
<dbReference type="Pfam" id="PF05199">
    <property type="entry name" value="GMC_oxred_C"/>
    <property type="match status" value="1"/>
</dbReference>
<dbReference type="Pfam" id="PF00732">
    <property type="entry name" value="GMC_oxred_N"/>
    <property type="match status" value="1"/>
</dbReference>
<dbReference type="PIRSF" id="PIRSF000137">
    <property type="entry name" value="Alcohol_oxidase"/>
    <property type="match status" value="1"/>
</dbReference>
<dbReference type="SUPFAM" id="SSF54373">
    <property type="entry name" value="FAD-linked reductases, C-terminal domain"/>
    <property type="match status" value="1"/>
</dbReference>
<dbReference type="SUPFAM" id="SSF51905">
    <property type="entry name" value="FAD/NAD(P)-binding domain"/>
    <property type="match status" value="1"/>
</dbReference>
<dbReference type="PROSITE" id="PS00623">
    <property type="entry name" value="GMC_OXRED_1"/>
    <property type="match status" value="1"/>
</dbReference>
<dbReference type="PROSITE" id="PS00624">
    <property type="entry name" value="GMC_OXRED_2"/>
    <property type="match status" value="1"/>
</dbReference>
<evidence type="ECO:0000255" key="1">
    <source>
        <dbReference type="HAMAP-Rule" id="MF_00750"/>
    </source>
</evidence>
<keyword id="KW-0274">FAD</keyword>
<keyword id="KW-0285">Flavoprotein</keyword>
<keyword id="KW-0520">NAD</keyword>
<keyword id="KW-0560">Oxidoreductase</keyword>
<proteinExistence type="inferred from homology"/>
<comment type="function">
    <text evidence="1">Involved in the biosynthesis of the osmoprotectant glycine betaine. Catalyzes the oxidation of choline to betaine aldehyde and betaine aldehyde to glycine betaine at the same rate.</text>
</comment>
<comment type="catalytic activity">
    <reaction evidence="1">
        <text>choline + A = betaine aldehyde + AH2</text>
        <dbReference type="Rhea" id="RHEA:17433"/>
        <dbReference type="ChEBI" id="CHEBI:13193"/>
        <dbReference type="ChEBI" id="CHEBI:15354"/>
        <dbReference type="ChEBI" id="CHEBI:15710"/>
        <dbReference type="ChEBI" id="CHEBI:17499"/>
        <dbReference type="EC" id="1.1.99.1"/>
    </reaction>
</comment>
<comment type="catalytic activity">
    <reaction evidence="1">
        <text>betaine aldehyde + NAD(+) + H2O = glycine betaine + NADH + 2 H(+)</text>
        <dbReference type="Rhea" id="RHEA:15305"/>
        <dbReference type="ChEBI" id="CHEBI:15377"/>
        <dbReference type="ChEBI" id="CHEBI:15378"/>
        <dbReference type="ChEBI" id="CHEBI:15710"/>
        <dbReference type="ChEBI" id="CHEBI:17750"/>
        <dbReference type="ChEBI" id="CHEBI:57540"/>
        <dbReference type="ChEBI" id="CHEBI:57945"/>
        <dbReference type="EC" id="1.2.1.8"/>
    </reaction>
</comment>
<comment type="cofactor">
    <cofactor evidence="1">
        <name>FAD</name>
        <dbReference type="ChEBI" id="CHEBI:57692"/>
    </cofactor>
</comment>
<comment type="pathway">
    <text evidence="1">Amine and polyamine biosynthesis; betaine biosynthesis via choline pathway; betaine aldehyde from choline (cytochrome c reductase route): step 1/1.</text>
</comment>
<comment type="similarity">
    <text evidence="1">Belongs to the GMC oxidoreductase family.</text>
</comment>
<organism>
    <name type="scientific">Acinetobacter baumannii (strain AYE)</name>
    <dbReference type="NCBI Taxonomy" id="509173"/>
    <lineage>
        <taxon>Bacteria</taxon>
        <taxon>Pseudomonadati</taxon>
        <taxon>Pseudomonadota</taxon>
        <taxon>Gammaproteobacteria</taxon>
        <taxon>Moraxellales</taxon>
        <taxon>Moraxellaceae</taxon>
        <taxon>Acinetobacter</taxon>
        <taxon>Acinetobacter calcoaceticus/baumannii complex</taxon>
    </lineage>
</organism>
<name>BETA_ACIBY</name>
<feature type="chain" id="PRO_1000133319" description="Oxygen-dependent choline dehydrogenase">
    <location>
        <begin position="1"/>
        <end position="552"/>
    </location>
</feature>
<feature type="active site" description="Proton acceptor" evidence="1">
    <location>
        <position position="477"/>
    </location>
</feature>
<feature type="binding site" evidence="1">
    <location>
        <begin position="7"/>
        <end position="36"/>
    </location>
    <ligand>
        <name>FAD</name>
        <dbReference type="ChEBI" id="CHEBI:57692"/>
    </ligand>
</feature>
<sequence length="552" mass="61302">MNIKEYDYIIIGAGSAGNVLAARLTEDKDTTVLLLEAGGPDYRLDFRTQMPAALAYPLQGRRYNWAYLTDPEPHMNNRRMECGRGKGLGGSSLINGMCYIRGNAMDLEQWATHKGLENWTYADCLPYYKKAETRDIGGNDYHGDSGPVSVATPKNGNNVLFHAMVEAGVQAGYPRTDDLNGYQQEGFGPMDRTVTPKGRRSSTARGYLDMAKGRPNLTILTHATTNKILFNQKQAIGVEYIIGADQNNLQRALVKREVLLCAGAIASPQILQRSGVGQSTFLKSMDIDVVHDLPGVGENLQDHLEMYLQYKCKQPVSLYPALKWYNQPAIGAEWLFNGTGIGASNQFEAGGFIRSSDEFKWPNIQYHFLPVAINYNGSNAVKEHGFQAHVGSMRSPSRGRIKLKSKDPFAHPSILFNYMSTEQDWREFRDAIRITREIMHQPALDPYRGDEISPGKHLQTDAELDDFVRNHAETAYHPSCSCKMGEDEMAVVDGQGRVHGMNGLRVVDASIMPLIITGNLNATTIMIAEKIADQIRGREALPRSTAPFYVAS</sequence>
<reference key="1">
    <citation type="journal article" date="2008" name="PLoS ONE">
        <title>Comparative analysis of Acinetobacters: three genomes for three lifestyles.</title>
        <authorList>
            <person name="Vallenet D."/>
            <person name="Nordmann P."/>
            <person name="Barbe V."/>
            <person name="Poirel L."/>
            <person name="Mangenot S."/>
            <person name="Bataille E."/>
            <person name="Dossat C."/>
            <person name="Gas S."/>
            <person name="Kreimeyer A."/>
            <person name="Lenoble P."/>
            <person name="Oztas S."/>
            <person name="Poulain J."/>
            <person name="Segurens B."/>
            <person name="Robert C."/>
            <person name="Abergel C."/>
            <person name="Claverie J.-M."/>
            <person name="Raoult D."/>
            <person name="Medigue C."/>
            <person name="Weissenbach J."/>
            <person name="Cruveiller S."/>
        </authorList>
    </citation>
    <scope>NUCLEOTIDE SEQUENCE [LARGE SCALE GENOMIC DNA]</scope>
    <source>
        <strain>AYE</strain>
    </source>
</reference>
<protein>
    <recommendedName>
        <fullName evidence="1">Oxygen-dependent choline dehydrogenase</fullName>
        <shortName evidence="1">CDH</shortName>
        <shortName evidence="1">CHD</shortName>
        <ecNumber evidence="1">1.1.99.1</ecNumber>
    </recommendedName>
    <alternativeName>
        <fullName evidence="1">Betaine aldehyde dehydrogenase</fullName>
        <shortName evidence="1">BADH</shortName>
        <ecNumber evidence="1">1.2.1.8</ecNumber>
    </alternativeName>
</protein>
<accession>B0V945</accession>